<protein>
    <recommendedName>
        <fullName>Uncharacterized membrane protein YvaC</fullName>
    </recommendedName>
</protein>
<proteinExistence type="inferred from homology"/>
<feature type="chain" id="PRO_0000389648" description="Uncharacterized membrane protein YvaC">
    <location>
        <begin position="1"/>
        <end position="631"/>
    </location>
</feature>
<feature type="transmembrane region" description="Helical" evidence="1">
    <location>
        <begin position="42"/>
        <end position="62"/>
    </location>
</feature>
<feature type="transmembrane region" description="Helical" evidence="1">
    <location>
        <begin position="76"/>
        <end position="96"/>
    </location>
</feature>
<feature type="transmembrane region" description="Helical" evidence="1">
    <location>
        <begin position="106"/>
        <end position="128"/>
    </location>
</feature>
<feature type="transmembrane region" description="Helical" evidence="1">
    <location>
        <begin position="152"/>
        <end position="172"/>
    </location>
</feature>
<feature type="transmembrane region" description="Helical" evidence="1">
    <location>
        <begin position="344"/>
        <end position="364"/>
    </location>
</feature>
<feature type="transmembrane region" description="Helical" evidence="1">
    <location>
        <begin position="366"/>
        <end position="386"/>
    </location>
</feature>
<feature type="transmembrane region" description="Helical" evidence="1">
    <location>
        <begin position="398"/>
        <end position="418"/>
    </location>
</feature>
<feature type="transmembrane region" description="Helical" evidence="1">
    <location>
        <begin position="429"/>
        <end position="449"/>
    </location>
</feature>
<feature type="transmembrane region" description="Helical" evidence="1">
    <location>
        <begin position="464"/>
        <end position="484"/>
    </location>
</feature>
<gene>
    <name type="primary">yvaC</name>
    <name type="ordered locus">BSU33550</name>
</gene>
<comment type="subcellular location">
    <subcellularLocation>
        <location evidence="2">Cell membrane</location>
        <topology evidence="2">Multi-pass membrane protein</topology>
    </subcellularLocation>
</comment>
<comment type="similarity">
    <text evidence="2">Belongs to the YccS/YhfK family.</text>
</comment>
<accession>O32225</accession>
<keyword id="KW-1003">Cell membrane</keyword>
<keyword id="KW-0472">Membrane</keyword>
<keyword id="KW-1185">Reference proteome</keyword>
<keyword id="KW-0812">Transmembrane</keyword>
<keyword id="KW-1133">Transmembrane helix</keyword>
<dbReference type="EMBL" id="AL009126">
    <property type="protein sequence ID" value="CAB15360.1"/>
    <property type="molecule type" value="Genomic_DNA"/>
</dbReference>
<dbReference type="PIR" id="A70027">
    <property type="entry name" value="A70027"/>
</dbReference>
<dbReference type="RefSeq" id="NP_391235.1">
    <property type="nucleotide sequence ID" value="NC_000964.3"/>
</dbReference>
<dbReference type="RefSeq" id="WP_003243180.1">
    <property type="nucleotide sequence ID" value="NZ_OZ025638.1"/>
</dbReference>
<dbReference type="FunCoup" id="O32225">
    <property type="interactions" value="68"/>
</dbReference>
<dbReference type="STRING" id="224308.BSU33550"/>
<dbReference type="PaxDb" id="224308-BSU33550"/>
<dbReference type="EnsemblBacteria" id="CAB15360">
    <property type="protein sequence ID" value="CAB15360"/>
    <property type="gene ID" value="BSU_33550"/>
</dbReference>
<dbReference type="GeneID" id="936143"/>
<dbReference type="KEGG" id="bsu:BSU33550"/>
<dbReference type="PATRIC" id="fig|224308.179.peg.3640"/>
<dbReference type="eggNOG" id="COG1289">
    <property type="taxonomic scope" value="Bacteria"/>
</dbReference>
<dbReference type="InParanoid" id="O32225"/>
<dbReference type="OrthoDB" id="581879at2"/>
<dbReference type="PhylomeDB" id="O32225"/>
<dbReference type="BioCyc" id="BSUB:BSU33550-MONOMER"/>
<dbReference type="Proteomes" id="UP000001570">
    <property type="component" value="Chromosome"/>
</dbReference>
<dbReference type="GO" id="GO:0005886">
    <property type="term" value="C:plasma membrane"/>
    <property type="evidence" value="ECO:0000318"/>
    <property type="project" value="GO_Central"/>
</dbReference>
<dbReference type="InterPro" id="IPR049453">
    <property type="entry name" value="Memb_transporter_dom"/>
</dbReference>
<dbReference type="PANTHER" id="PTHR30509:SF9">
    <property type="entry name" value="MULTIDRUG RESISTANCE PROTEIN MDTO"/>
    <property type="match status" value="1"/>
</dbReference>
<dbReference type="PANTHER" id="PTHR30509">
    <property type="entry name" value="P-HYDROXYBENZOIC ACID EFFLUX PUMP SUBUNIT-RELATED"/>
    <property type="match status" value="1"/>
</dbReference>
<dbReference type="Pfam" id="PF13515">
    <property type="entry name" value="FUSC_2"/>
    <property type="match status" value="1"/>
</dbReference>
<sequence length="631" mass="69423">MNKTAANNQRIMPIVKDAFRIHANPFPWKKAIGSGFASGFPVLVGALAGHTDYGLIASIGGFVYLYAGGESYKKRALKLLLVSIGIALSFGLGTLLSGMLWMMAAVLGLIGAAAMFIFSALGIQGPAPMFFVLAFLVSSGLPADPSQALFRAGLTFLGGIFAMGIALIGWLWNKHGPEGAVLQKTYHQLAACLSAVGTPGFHNAQHQTVLMLRTARQTVLGKGNRRKKSRHDERFFRLLEKADDIFIAIIHFSAETPDRETAQIEKALRQTGDMLANARVFNTFQINENESEPRRKLFEEINEVLYIASGRFDKQLDGEPSRLPSSFYFLRNAFDWKSPVLIRALKYGIVLFAADMFALAFGFARSYWIPLSAAAVMLGTTVVFTLHRAIQRSAGTVIGVILAGAILFFKPGGVYIAFCIAALQCLLEMLIVRNYALAVPFLTANALVITESMHGGAGAGYFMIARLTDVAVGSVIGLLGTMLLWRRFSTKRLPELVRNVIRLEGQFMEKLLTGQIADEHKLRVSLVRLRDAYDKALGEFPHANADALWPAISGAQHLGYYLLSAQAHRRPSAPFSDEEINQLRAFFEQAEQSFIMKRMPADIQVPHVPHYPRISKELSALYSGLRTAFEK</sequence>
<name>YVAC_BACSU</name>
<reference key="1">
    <citation type="journal article" date="1997" name="Nature">
        <title>The complete genome sequence of the Gram-positive bacterium Bacillus subtilis.</title>
        <authorList>
            <person name="Kunst F."/>
            <person name="Ogasawara N."/>
            <person name="Moszer I."/>
            <person name="Albertini A.M."/>
            <person name="Alloni G."/>
            <person name="Azevedo V."/>
            <person name="Bertero M.G."/>
            <person name="Bessieres P."/>
            <person name="Bolotin A."/>
            <person name="Borchert S."/>
            <person name="Borriss R."/>
            <person name="Boursier L."/>
            <person name="Brans A."/>
            <person name="Braun M."/>
            <person name="Brignell S.C."/>
            <person name="Bron S."/>
            <person name="Brouillet S."/>
            <person name="Bruschi C.V."/>
            <person name="Caldwell B."/>
            <person name="Capuano V."/>
            <person name="Carter N.M."/>
            <person name="Choi S.-K."/>
            <person name="Codani J.-J."/>
            <person name="Connerton I.F."/>
            <person name="Cummings N.J."/>
            <person name="Daniel R.A."/>
            <person name="Denizot F."/>
            <person name="Devine K.M."/>
            <person name="Duesterhoeft A."/>
            <person name="Ehrlich S.D."/>
            <person name="Emmerson P.T."/>
            <person name="Entian K.-D."/>
            <person name="Errington J."/>
            <person name="Fabret C."/>
            <person name="Ferrari E."/>
            <person name="Foulger D."/>
            <person name="Fritz C."/>
            <person name="Fujita M."/>
            <person name="Fujita Y."/>
            <person name="Fuma S."/>
            <person name="Galizzi A."/>
            <person name="Galleron N."/>
            <person name="Ghim S.-Y."/>
            <person name="Glaser P."/>
            <person name="Goffeau A."/>
            <person name="Golightly E.J."/>
            <person name="Grandi G."/>
            <person name="Guiseppi G."/>
            <person name="Guy B.J."/>
            <person name="Haga K."/>
            <person name="Haiech J."/>
            <person name="Harwood C.R."/>
            <person name="Henaut A."/>
            <person name="Hilbert H."/>
            <person name="Holsappel S."/>
            <person name="Hosono S."/>
            <person name="Hullo M.-F."/>
            <person name="Itaya M."/>
            <person name="Jones L.-M."/>
            <person name="Joris B."/>
            <person name="Karamata D."/>
            <person name="Kasahara Y."/>
            <person name="Klaerr-Blanchard M."/>
            <person name="Klein C."/>
            <person name="Kobayashi Y."/>
            <person name="Koetter P."/>
            <person name="Koningstein G."/>
            <person name="Krogh S."/>
            <person name="Kumano M."/>
            <person name="Kurita K."/>
            <person name="Lapidus A."/>
            <person name="Lardinois S."/>
            <person name="Lauber J."/>
            <person name="Lazarevic V."/>
            <person name="Lee S.-M."/>
            <person name="Levine A."/>
            <person name="Liu H."/>
            <person name="Masuda S."/>
            <person name="Mauel C."/>
            <person name="Medigue C."/>
            <person name="Medina N."/>
            <person name="Mellado R.P."/>
            <person name="Mizuno M."/>
            <person name="Moestl D."/>
            <person name="Nakai S."/>
            <person name="Noback M."/>
            <person name="Noone D."/>
            <person name="O'Reilly M."/>
            <person name="Ogawa K."/>
            <person name="Ogiwara A."/>
            <person name="Oudega B."/>
            <person name="Park S.-H."/>
            <person name="Parro V."/>
            <person name="Pohl T.M."/>
            <person name="Portetelle D."/>
            <person name="Porwollik S."/>
            <person name="Prescott A.M."/>
            <person name="Presecan E."/>
            <person name="Pujic P."/>
            <person name="Purnelle B."/>
            <person name="Rapoport G."/>
            <person name="Rey M."/>
            <person name="Reynolds S."/>
            <person name="Rieger M."/>
            <person name="Rivolta C."/>
            <person name="Rocha E."/>
            <person name="Roche B."/>
            <person name="Rose M."/>
            <person name="Sadaie Y."/>
            <person name="Sato T."/>
            <person name="Scanlan E."/>
            <person name="Schleich S."/>
            <person name="Schroeter R."/>
            <person name="Scoffone F."/>
            <person name="Sekiguchi J."/>
            <person name="Sekowska A."/>
            <person name="Seror S.J."/>
            <person name="Serror P."/>
            <person name="Shin B.-S."/>
            <person name="Soldo B."/>
            <person name="Sorokin A."/>
            <person name="Tacconi E."/>
            <person name="Takagi T."/>
            <person name="Takahashi H."/>
            <person name="Takemaru K."/>
            <person name="Takeuchi M."/>
            <person name="Tamakoshi A."/>
            <person name="Tanaka T."/>
            <person name="Terpstra P."/>
            <person name="Tognoni A."/>
            <person name="Tosato V."/>
            <person name="Uchiyama S."/>
            <person name="Vandenbol M."/>
            <person name="Vannier F."/>
            <person name="Vassarotti A."/>
            <person name="Viari A."/>
            <person name="Wambutt R."/>
            <person name="Wedler E."/>
            <person name="Wedler H."/>
            <person name="Weitzenegger T."/>
            <person name="Winters P."/>
            <person name="Wipat A."/>
            <person name="Yamamoto H."/>
            <person name="Yamane K."/>
            <person name="Yasumoto K."/>
            <person name="Yata K."/>
            <person name="Yoshida K."/>
            <person name="Yoshikawa H.-F."/>
            <person name="Zumstein E."/>
            <person name="Yoshikawa H."/>
            <person name="Danchin A."/>
        </authorList>
    </citation>
    <scope>NUCLEOTIDE SEQUENCE [LARGE SCALE GENOMIC DNA]</scope>
    <source>
        <strain>168</strain>
    </source>
</reference>
<evidence type="ECO:0000255" key="1"/>
<evidence type="ECO:0000305" key="2"/>
<organism>
    <name type="scientific">Bacillus subtilis (strain 168)</name>
    <dbReference type="NCBI Taxonomy" id="224308"/>
    <lineage>
        <taxon>Bacteria</taxon>
        <taxon>Bacillati</taxon>
        <taxon>Bacillota</taxon>
        <taxon>Bacilli</taxon>
        <taxon>Bacillales</taxon>
        <taxon>Bacillaceae</taxon>
        <taxon>Bacillus</taxon>
    </lineage>
</organism>